<protein>
    <recommendedName>
        <fullName evidence="1">Small ribosomal subunit protein uS5</fullName>
    </recommendedName>
    <alternativeName>
        <fullName evidence="2">30S ribosomal protein S5</fullName>
    </alternativeName>
</protein>
<feature type="chain" id="PRO_0000131661" description="Small ribosomal subunit protein uS5">
    <location>
        <begin position="1"/>
        <end position="214"/>
    </location>
</feature>
<feature type="domain" description="S5 DRBM" evidence="1">
    <location>
        <begin position="54"/>
        <end position="117"/>
    </location>
</feature>
<organism>
    <name type="scientific">Saccharolobus solfataricus (strain ATCC 35092 / DSM 1617 / JCM 11322 / P2)</name>
    <name type="common">Sulfolobus solfataricus</name>
    <dbReference type="NCBI Taxonomy" id="273057"/>
    <lineage>
        <taxon>Archaea</taxon>
        <taxon>Thermoproteota</taxon>
        <taxon>Thermoprotei</taxon>
        <taxon>Sulfolobales</taxon>
        <taxon>Sulfolobaceae</taxon>
        <taxon>Saccharolobus</taxon>
    </lineage>
</organism>
<reference key="1">
    <citation type="journal article" date="2000" name="Genome">
        <title>Gene content and organization of a 281-kbp contig from the genome of the extremely thermophilic archaeon, Sulfolobus solfataricus P2.</title>
        <authorList>
            <person name="Charlebois R.L."/>
            <person name="Singh R.K."/>
            <person name="Chan-Weiher C.C.-Y."/>
            <person name="Allard G."/>
            <person name="Chow C."/>
            <person name="Confalonieri F."/>
            <person name="Curtis B."/>
            <person name="Duguet M."/>
            <person name="Erauso G."/>
            <person name="Faguy D."/>
            <person name="Gaasterland T."/>
            <person name="Garrett R.A."/>
            <person name="Gordon P."/>
            <person name="Jeffries A.C."/>
            <person name="Kozera C."/>
            <person name="Kushwaha N."/>
            <person name="Lafleur E."/>
            <person name="Medina N."/>
            <person name="Peng X."/>
            <person name="Penny S.L."/>
            <person name="She Q."/>
            <person name="St Jean A."/>
            <person name="van der Oost J."/>
            <person name="Young F."/>
            <person name="Zivanovic Y."/>
            <person name="Doolittle W.F."/>
            <person name="Ragan M.A."/>
            <person name="Sensen C.W."/>
        </authorList>
    </citation>
    <scope>NUCLEOTIDE SEQUENCE [LARGE SCALE GENOMIC DNA]</scope>
    <source>
        <strain>ATCC 35092 / DSM 1617 / JCM 11322 / P2</strain>
    </source>
</reference>
<reference key="2">
    <citation type="journal article" date="2001" name="Proc. Natl. Acad. Sci. U.S.A.">
        <title>The complete genome of the crenarchaeon Sulfolobus solfataricus P2.</title>
        <authorList>
            <person name="She Q."/>
            <person name="Singh R.K."/>
            <person name="Confalonieri F."/>
            <person name="Zivanovic Y."/>
            <person name="Allard G."/>
            <person name="Awayez M.J."/>
            <person name="Chan-Weiher C.C.-Y."/>
            <person name="Clausen I.G."/>
            <person name="Curtis B.A."/>
            <person name="De Moors A."/>
            <person name="Erauso G."/>
            <person name="Fletcher C."/>
            <person name="Gordon P.M.K."/>
            <person name="Heikamp-de Jong I."/>
            <person name="Jeffries A.C."/>
            <person name="Kozera C.J."/>
            <person name="Medina N."/>
            <person name="Peng X."/>
            <person name="Thi-Ngoc H.P."/>
            <person name="Redder P."/>
            <person name="Schenk M.E."/>
            <person name="Theriault C."/>
            <person name="Tolstrup N."/>
            <person name="Charlebois R.L."/>
            <person name="Doolittle W.F."/>
            <person name="Duguet M."/>
            <person name="Gaasterland T."/>
            <person name="Garrett R.A."/>
            <person name="Ragan M.A."/>
            <person name="Sensen C.W."/>
            <person name="Van der Oost J."/>
        </authorList>
    </citation>
    <scope>NUCLEOTIDE SEQUENCE [LARGE SCALE GENOMIC DNA]</scope>
    <source>
        <strain>ATCC 35092 / DSM 1617 / JCM 11322 / P2</strain>
    </source>
</reference>
<evidence type="ECO:0000255" key="1">
    <source>
        <dbReference type="HAMAP-Rule" id="MF_01307"/>
    </source>
</evidence>
<evidence type="ECO:0000305" key="2"/>
<sequence length="214" mass="23686">MAEEVPSLNIEEWKPRTSIGSLVKEGKISSIKELFDRNLPITEPEIVDVLLPKLKYEVVDIKVVQKQTDAGEISRYKVLVIMGNMDGYVSIGTGKAKQLRVAIQKAIRDAKMNIIPVRRGCGSWQCTCGEPHSLPFKVVGKAGSVEVDLLPAPKGTGLVVGSVLKTLLTYAGIKDAWSTTKGETRTTENFVRAGYSALYNTYKFVTLQDWVRKR</sequence>
<dbReference type="EMBL" id="Y18930">
    <property type="protein sequence ID" value="CAB57605.1"/>
    <property type="status" value="ALT_INIT"/>
    <property type="molecule type" value="Genomic_DNA"/>
</dbReference>
<dbReference type="EMBL" id="AE006641">
    <property type="protein sequence ID" value="AAK40999.1"/>
    <property type="status" value="ALT_INIT"/>
    <property type="molecule type" value="Genomic_DNA"/>
</dbReference>
<dbReference type="PIR" id="H90217">
    <property type="entry name" value="H90217"/>
</dbReference>
<dbReference type="RefSeq" id="WP_014511594.1">
    <property type="nucleotide sequence ID" value="NC_002754.1"/>
</dbReference>
<dbReference type="PDB" id="9FHL">
    <property type="method" value="EM"/>
    <property type="resolution" value="2.50 A"/>
    <property type="chains" value="F=1-214"/>
</dbReference>
<dbReference type="PDB" id="9FRA">
    <property type="method" value="EM"/>
    <property type="resolution" value="2.80 A"/>
    <property type="chains" value="F=1-211"/>
</dbReference>
<dbReference type="PDB" id="9FRK">
    <property type="method" value="EM"/>
    <property type="resolution" value="3.00 A"/>
    <property type="chains" value="F=1-214"/>
</dbReference>
<dbReference type="PDB" id="9FRL">
    <property type="method" value="EM"/>
    <property type="resolution" value="2.97 A"/>
    <property type="chains" value="F=1-214"/>
</dbReference>
<dbReference type="PDB" id="9FS6">
    <property type="method" value="EM"/>
    <property type="resolution" value="2.90 A"/>
    <property type="chains" value="F=1-214"/>
</dbReference>
<dbReference type="PDB" id="9FS8">
    <property type="method" value="EM"/>
    <property type="resolution" value="3.70 A"/>
    <property type="chains" value="F=1-214"/>
</dbReference>
<dbReference type="PDB" id="9FSF">
    <property type="method" value="EM"/>
    <property type="resolution" value="2.80 A"/>
    <property type="chains" value="F=1-214"/>
</dbReference>
<dbReference type="PDB" id="9FY0">
    <property type="method" value="EM"/>
    <property type="resolution" value="2.90 A"/>
    <property type="chains" value="F=1-214"/>
</dbReference>
<dbReference type="PDBsum" id="9FHL"/>
<dbReference type="PDBsum" id="9FRA"/>
<dbReference type="PDBsum" id="9FRK"/>
<dbReference type="PDBsum" id="9FRL"/>
<dbReference type="PDBsum" id="9FS6"/>
<dbReference type="PDBsum" id="9FS8"/>
<dbReference type="PDBsum" id="9FSF"/>
<dbReference type="PDBsum" id="9FY0"/>
<dbReference type="EMDB" id="EMD-50445"/>
<dbReference type="EMDB" id="EMD-50709"/>
<dbReference type="EMDB" id="EMD-50716"/>
<dbReference type="EMDB" id="EMD-50717"/>
<dbReference type="EMDB" id="EMD-50724"/>
<dbReference type="EMDB" id="EMD-50725"/>
<dbReference type="EMDB" id="EMD-50727"/>
<dbReference type="EMDB" id="EMD-50854"/>
<dbReference type="SMR" id="Q9UX87"/>
<dbReference type="FunCoup" id="Q9UX87">
    <property type="interactions" value="271"/>
</dbReference>
<dbReference type="STRING" id="273057.SSO0698"/>
<dbReference type="PaxDb" id="273057-SSO0698"/>
<dbReference type="EnsemblBacteria" id="AAK40999">
    <property type="protein sequence ID" value="AAK40999"/>
    <property type="gene ID" value="SSO0698"/>
</dbReference>
<dbReference type="KEGG" id="sso:SSO0698"/>
<dbReference type="PATRIC" id="fig|273057.12.peg.698"/>
<dbReference type="eggNOG" id="arCOG04087">
    <property type="taxonomic scope" value="Archaea"/>
</dbReference>
<dbReference type="HOGENOM" id="CLU_065898_0_1_2"/>
<dbReference type="InParanoid" id="Q9UX87"/>
<dbReference type="PhylomeDB" id="Q9UX87"/>
<dbReference type="Proteomes" id="UP000001974">
    <property type="component" value="Chromosome"/>
</dbReference>
<dbReference type="GO" id="GO:0022627">
    <property type="term" value="C:cytosolic small ribosomal subunit"/>
    <property type="evidence" value="ECO:0000318"/>
    <property type="project" value="GO_Central"/>
</dbReference>
<dbReference type="GO" id="GO:0019843">
    <property type="term" value="F:rRNA binding"/>
    <property type="evidence" value="ECO:0007669"/>
    <property type="project" value="UniProtKB-UniRule"/>
</dbReference>
<dbReference type="GO" id="GO:0003735">
    <property type="term" value="F:structural constituent of ribosome"/>
    <property type="evidence" value="ECO:0000318"/>
    <property type="project" value="GO_Central"/>
</dbReference>
<dbReference type="GO" id="GO:0006412">
    <property type="term" value="P:translation"/>
    <property type="evidence" value="ECO:0000318"/>
    <property type="project" value="GO_Central"/>
</dbReference>
<dbReference type="FunFam" id="3.30.160.20:FF:000002">
    <property type="entry name" value="40S ribosomal protein S2"/>
    <property type="match status" value="1"/>
</dbReference>
<dbReference type="FunFam" id="3.30.230.10:FF:000004">
    <property type="entry name" value="40S ribosomal protein S2"/>
    <property type="match status" value="1"/>
</dbReference>
<dbReference type="Gene3D" id="3.30.160.20">
    <property type="match status" value="1"/>
</dbReference>
<dbReference type="Gene3D" id="3.30.230.10">
    <property type="match status" value="1"/>
</dbReference>
<dbReference type="HAMAP" id="MF_01307_A">
    <property type="entry name" value="Ribosomal_uS5_A"/>
    <property type="match status" value="1"/>
</dbReference>
<dbReference type="InterPro" id="IPR020568">
    <property type="entry name" value="Ribosomal_Su5_D2-typ_SF"/>
</dbReference>
<dbReference type="InterPro" id="IPR000851">
    <property type="entry name" value="Ribosomal_uS5"/>
</dbReference>
<dbReference type="InterPro" id="IPR047866">
    <property type="entry name" value="Ribosomal_uS5_arc"/>
</dbReference>
<dbReference type="InterPro" id="IPR005324">
    <property type="entry name" value="Ribosomal_uS5_C"/>
</dbReference>
<dbReference type="InterPro" id="IPR005711">
    <property type="entry name" value="Ribosomal_uS5_euk/arc"/>
</dbReference>
<dbReference type="InterPro" id="IPR013810">
    <property type="entry name" value="Ribosomal_uS5_N"/>
</dbReference>
<dbReference type="InterPro" id="IPR018192">
    <property type="entry name" value="Ribosomal_uS5_N_CS"/>
</dbReference>
<dbReference type="InterPro" id="IPR014721">
    <property type="entry name" value="Ribsml_uS5_D2-typ_fold_subgr"/>
</dbReference>
<dbReference type="NCBIfam" id="NF003125">
    <property type="entry name" value="PRK04044.1"/>
    <property type="match status" value="1"/>
</dbReference>
<dbReference type="NCBIfam" id="TIGR01020">
    <property type="entry name" value="uS5_euk_arch"/>
    <property type="match status" value="1"/>
</dbReference>
<dbReference type="PANTHER" id="PTHR13718:SF4">
    <property type="entry name" value="40S RIBOSOMAL PROTEIN S2"/>
    <property type="match status" value="1"/>
</dbReference>
<dbReference type="PANTHER" id="PTHR13718">
    <property type="entry name" value="RIBOSOMAL S SUBUNIT"/>
    <property type="match status" value="1"/>
</dbReference>
<dbReference type="Pfam" id="PF00333">
    <property type="entry name" value="Ribosomal_S5"/>
    <property type="match status" value="1"/>
</dbReference>
<dbReference type="Pfam" id="PF03719">
    <property type="entry name" value="Ribosomal_S5_C"/>
    <property type="match status" value="1"/>
</dbReference>
<dbReference type="SUPFAM" id="SSF54768">
    <property type="entry name" value="dsRNA-binding domain-like"/>
    <property type="match status" value="1"/>
</dbReference>
<dbReference type="SUPFAM" id="SSF54211">
    <property type="entry name" value="Ribosomal protein S5 domain 2-like"/>
    <property type="match status" value="1"/>
</dbReference>
<dbReference type="PROSITE" id="PS00585">
    <property type="entry name" value="RIBOSOMAL_S5"/>
    <property type="match status" value="1"/>
</dbReference>
<dbReference type="PROSITE" id="PS50881">
    <property type="entry name" value="S5_DSRBD"/>
    <property type="match status" value="1"/>
</dbReference>
<proteinExistence type="evidence at protein level"/>
<accession>Q9UX87</accession>
<keyword id="KW-0002">3D-structure</keyword>
<keyword id="KW-1185">Reference proteome</keyword>
<keyword id="KW-0687">Ribonucleoprotein</keyword>
<keyword id="KW-0689">Ribosomal protein</keyword>
<keyword id="KW-0694">RNA-binding</keyword>
<keyword id="KW-0699">rRNA-binding</keyword>
<comment type="function">
    <text evidence="1">With S4 and S12 plays an important role in translational accuracy.</text>
</comment>
<comment type="subunit">
    <text evidence="1">Part of the 30S ribosomal subunit. Contacts protein S4.</text>
</comment>
<comment type="domain">
    <text>The N-terminal domain interacts with the head of the 30S subunit; the C-terminal domain interacts with the body and contacts protein S4. The interaction surface between S4 and S5 is involved in control of translational fidelity.</text>
</comment>
<comment type="similarity">
    <text evidence="1">Belongs to the universal ribosomal protein uS5 family.</text>
</comment>
<comment type="sequence caution" evidence="2">
    <conflict type="erroneous initiation">
        <sequence resource="EMBL-CDS" id="AAK40999"/>
    </conflict>
    <text>Extended N-terminus.</text>
</comment>
<comment type="sequence caution" evidence="2">
    <conflict type="erroneous initiation">
        <sequence resource="EMBL-CDS" id="CAB57605"/>
    </conflict>
    <text>Extended N-terminus.</text>
</comment>
<gene>
    <name evidence="1" type="primary">rps5</name>
    <name evidence="1" type="synonym">rps5Ab</name>
    <name type="ordered locus">SSO0698</name>
    <name type="ORF">C10_032</name>
</gene>
<name>RS5_SACS2</name>